<organism>
    <name type="scientific">Caenorhabditis elegans</name>
    <dbReference type="NCBI Taxonomy" id="6239"/>
    <lineage>
        <taxon>Eukaryota</taxon>
        <taxon>Metazoa</taxon>
        <taxon>Ecdysozoa</taxon>
        <taxon>Nematoda</taxon>
        <taxon>Chromadorea</taxon>
        <taxon>Rhabditida</taxon>
        <taxon>Rhabditina</taxon>
        <taxon>Rhabditomorpha</taxon>
        <taxon>Rhabditoidea</taxon>
        <taxon>Rhabditidae</taxon>
        <taxon>Peloderinae</taxon>
        <taxon>Caenorhabditis</taxon>
    </lineage>
</organism>
<dbReference type="EC" id="1.4.3.5"/>
<dbReference type="EMBL" id="FO081266">
    <property type="protein sequence ID" value="CCD70322.1"/>
    <property type="molecule type" value="Genomic_DNA"/>
</dbReference>
<dbReference type="PIR" id="A88494">
    <property type="entry name" value="A88494"/>
</dbReference>
<dbReference type="RefSeq" id="NP_001370689.1">
    <property type="nucleotide sequence ID" value="NM_001382904.2"/>
</dbReference>
<dbReference type="RefSeq" id="NP_498518.2">
    <property type="nucleotide sequence ID" value="NM_066117.3"/>
</dbReference>
<dbReference type="SMR" id="Q20939"/>
<dbReference type="BioGRID" id="41187">
    <property type="interactions" value="2"/>
</dbReference>
<dbReference type="FunCoup" id="Q20939">
    <property type="interactions" value="1691"/>
</dbReference>
<dbReference type="IntAct" id="Q20939">
    <property type="interactions" value="1"/>
</dbReference>
<dbReference type="STRING" id="6239.F57B9.1.3"/>
<dbReference type="PaxDb" id="6239-F57B9.1"/>
<dbReference type="PeptideAtlas" id="Q20939"/>
<dbReference type="EnsemblMetazoa" id="F57B9.1.1">
    <property type="protein sequence ID" value="F57B9.1.1"/>
    <property type="gene ID" value="WBGene00018996"/>
</dbReference>
<dbReference type="EnsemblMetazoa" id="F57B9.1.2">
    <property type="protein sequence ID" value="F57B9.1.2"/>
    <property type="gene ID" value="WBGene00018996"/>
</dbReference>
<dbReference type="GeneID" id="175973"/>
<dbReference type="UCSC" id="F57B9.1">
    <property type="organism name" value="c. elegans"/>
</dbReference>
<dbReference type="AGR" id="WB:WBGene00018996"/>
<dbReference type="WormBase" id="F57B9.1">
    <property type="protein sequence ID" value="CE44186"/>
    <property type="gene ID" value="WBGene00018996"/>
</dbReference>
<dbReference type="eggNOG" id="KOG2586">
    <property type="taxonomic scope" value="Eukaryota"/>
</dbReference>
<dbReference type="GeneTree" id="ENSGT00390000011219"/>
<dbReference type="HOGENOM" id="CLU_032263_2_1_1"/>
<dbReference type="InParanoid" id="Q20939"/>
<dbReference type="OMA" id="NVPEPHA"/>
<dbReference type="OrthoDB" id="303614at2759"/>
<dbReference type="PhylomeDB" id="Q20939"/>
<dbReference type="Reactome" id="R-CEL-964975">
    <property type="pathway name" value="Vitamin B6 activation to pyridoxal phosphate"/>
</dbReference>
<dbReference type="UniPathway" id="UPA01068">
    <property type="reaction ID" value="UER00304"/>
</dbReference>
<dbReference type="UniPathway" id="UPA01068">
    <property type="reaction ID" value="UER00305"/>
</dbReference>
<dbReference type="PRO" id="PR:Q20939"/>
<dbReference type="Proteomes" id="UP000001940">
    <property type="component" value="Chromosome III"/>
</dbReference>
<dbReference type="Bgee" id="WBGene00018996">
    <property type="expression patterns" value="Expressed in germ line (C elegans) and 4 other cell types or tissues"/>
</dbReference>
<dbReference type="GO" id="GO:0010181">
    <property type="term" value="F:FMN binding"/>
    <property type="evidence" value="ECO:0007669"/>
    <property type="project" value="InterPro"/>
</dbReference>
<dbReference type="GO" id="GO:0004733">
    <property type="term" value="F:pyridoxamine phosphate oxidase activity"/>
    <property type="evidence" value="ECO:0000318"/>
    <property type="project" value="GO_Central"/>
</dbReference>
<dbReference type="GO" id="GO:0042823">
    <property type="term" value="P:pyridoxal phosphate biosynthetic process"/>
    <property type="evidence" value="ECO:0000318"/>
    <property type="project" value="GO_Central"/>
</dbReference>
<dbReference type="GO" id="GO:0008615">
    <property type="term" value="P:pyridoxine biosynthetic process"/>
    <property type="evidence" value="ECO:0007669"/>
    <property type="project" value="UniProtKB-KW"/>
</dbReference>
<dbReference type="FunFam" id="2.30.110.10:FF:000053">
    <property type="entry name" value="Protein CBG16488"/>
    <property type="match status" value="1"/>
</dbReference>
<dbReference type="Gene3D" id="2.30.110.10">
    <property type="entry name" value="Electron Transport, Fmn-binding Protein, Chain A"/>
    <property type="match status" value="1"/>
</dbReference>
<dbReference type="HAMAP" id="MF_01629">
    <property type="entry name" value="PdxH"/>
    <property type="match status" value="1"/>
</dbReference>
<dbReference type="InterPro" id="IPR000659">
    <property type="entry name" value="Pyridox_Oxase"/>
</dbReference>
<dbReference type="InterPro" id="IPR019740">
    <property type="entry name" value="Pyridox_Oxase_CS"/>
</dbReference>
<dbReference type="InterPro" id="IPR011576">
    <property type="entry name" value="Pyridox_Oxase_N"/>
</dbReference>
<dbReference type="InterPro" id="IPR019576">
    <property type="entry name" value="Pyridoxamine_oxidase_dimer_C"/>
</dbReference>
<dbReference type="InterPro" id="IPR012349">
    <property type="entry name" value="Split_barrel_FMN-bd"/>
</dbReference>
<dbReference type="NCBIfam" id="TIGR00558">
    <property type="entry name" value="pdxH"/>
    <property type="match status" value="1"/>
</dbReference>
<dbReference type="NCBIfam" id="NF004231">
    <property type="entry name" value="PRK05679.1"/>
    <property type="match status" value="1"/>
</dbReference>
<dbReference type="PANTHER" id="PTHR10851:SF0">
    <property type="entry name" value="PYRIDOXINE-5'-PHOSPHATE OXIDASE"/>
    <property type="match status" value="1"/>
</dbReference>
<dbReference type="PANTHER" id="PTHR10851">
    <property type="entry name" value="PYRIDOXINE-5-PHOSPHATE OXIDASE"/>
    <property type="match status" value="1"/>
</dbReference>
<dbReference type="Pfam" id="PF10590">
    <property type="entry name" value="PNP_phzG_C"/>
    <property type="match status" value="1"/>
</dbReference>
<dbReference type="Pfam" id="PF01243">
    <property type="entry name" value="PNPOx_N"/>
    <property type="match status" value="1"/>
</dbReference>
<dbReference type="PIRSF" id="PIRSF000190">
    <property type="entry name" value="Pyd_amn-ph_oxd"/>
    <property type="match status" value="1"/>
</dbReference>
<dbReference type="SUPFAM" id="SSF50475">
    <property type="entry name" value="FMN-binding split barrel"/>
    <property type="match status" value="1"/>
</dbReference>
<dbReference type="PROSITE" id="PS01064">
    <property type="entry name" value="PYRIDOX_OXIDASE"/>
    <property type="match status" value="1"/>
</dbReference>
<name>PDXH_CAEEL</name>
<reference key="1">
    <citation type="journal article" date="1998" name="Science">
        <title>Genome sequence of the nematode C. elegans: a platform for investigating biology.</title>
        <authorList>
            <consortium name="The C. elegans sequencing consortium"/>
        </authorList>
    </citation>
    <scope>NUCLEOTIDE SEQUENCE [LARGE SCALE GENOMIC DNA]</scope>
    <source>
        <strain>Bristol N2</strain>
    </source>
</reference>
<sequence>METPSIDIQNIRAKYLNSHDPYLLESKLPTTSPFELFDIWFRNVASQSDLTFEEINAVSLSTVGKDLRPSSRMVLLKAYTPTGFSFYTNYTSRKGNQLEENPNAAMLFYWPKVNRQIRVEGVVEKLPDEMAVAYWNSRPVASRIGSKSSDQSKVVPDREFLESKKVALTELSVREGAQAITKPESWGGYHLIPRYFEFWQGQSDRLHDRIVFERDVDVWLLKRLSP</sequence>
<gene>
    <name type="ORF">F57B9.1</name>
</gene>
<protein>
    <recommendedName>
        <fullName>Putative pyridoxamine 5'-phosphate oxidase</fullName>
        <ecNumber>1.4.3.5</ecNumber>
    </recommendedName>
    <alternativeName>
        <fullName>PNP/PMP oxidase</fullName>
        <shortName>PNPOx</shortName>
    </alternativeName>
</protein>
<evidence type="ECO:0000250" key="1"/>
<evidence type="ECO:0000250" key="2">
    <source>
        <dbReference type="UniProtKB" id="P0AFI7"/>
    </source>
</evidence>
<evidence type="ECO:0000250" key="3">
    <source>
        <dbReference type="UniProtKB" id="Q9NVS9"/>
    </source>
</evidence>
<evidence type="ECO:0000305" key="4"/>
<proteinExistence type="inferred from homology"/>
<feature type="chain" id="PRO_0000167788" description="Putative pyridoxamine 5'-phosphate oxidase">
    <location>
        <begin position="1"/>
        <end position="226"/>
    </location>
</feature>
<feature type="binding site" evidence="2">
    <location>
        <begin position="16"/>
        <end position="19"/>
    </location>
    <ligand>
        <name>pyridoxal 5'-phosphate</name>
        <dbReference type="ChEBI" id="CHEBI:597326"/>
    </ligand>
</feature>
<feature type="binding site" evidence="3">
    <location>
        <begin position="72"/>
        <end position="75"/>
    </location>
    <ligand>
        <name>FMN</name>
        <dbReference type="ChEBI" id="CHEBI:58210"/>
    </ligand>
</feature>
<feature type="binding site" evidence="3">
    <location>
        <position position="77"/>
    </location>
    <ligand>
        <name>pyridoxal 5'-phosphate</name>
        <dbReference type="ChEBI" id="CHEBI:597326"/>
    </ligand>
</feature>
<feature type="binding site" evidence="3">
    <location>
        <begin position="87"/>
        <end position="88"/>
    </location>
    <ligand>
        <name>FMN</name>
        <dbReference type="ChEBI" id="CHEBI:58210"/>
    </ligand>
</feature>
<feature type="binding site" evidence="3">
    <location>
        <begin position="93"/>
        <end position="94"/>
    </location>
    <ligand>
        <name>FMN</name>
        <dbReference type="ChEBI" id="CHEBI:58210"/>
    </ligand>
</feature>
<feature type="binding site" evidence="2">
    <location>
        <position position="116"/>
    </location>
    <ligand>
        <name>FMN</name>
        <dbReference type="ChEBI" id="CHEBI:58210"/>
    </ligand>
</feature>
<feature type="binding site" evidence="3">
    <location>
        <position position="134"/>
    </location>
    <ligand>
        <name>pyridoxal 5'-phosphate</name>
        <dbReference type="ChEBI" id="CHEBI:597326"/>
    </ligand>
</feature>
<feature type="binding site" evidence="3">
    <location>
        <position position="138"/>
    </location>
    <ligand>
        <name>pyridoxal 5'-phosphate</name>
        <dbReference type="ChEBI" id="CHEBI:597326"/>
    </ligand>
</feature>
<feature type="binding site" evidence="3">
    <location>
        <position position="142"/>
    </location>
    <ligand>
        <name>pyridoxal 5'-phosphate</name>
        <dbReference type="ChEBI" id="CHEBI:597326"/>
    </ligand>
</feature>
<feature type="binding site" evidence="3">
    <location>
        <begin position="151"/>
        <end position="152"/>
    </location>
    <ligand>
        <name>FMN</name>
        <dbReference type="ChEBI" id="CHEBI:58210"/>
    </ligand>
</feature>
<feature type="binding site" evidence="2">
    <location>
        <position position="199"/>
    </location>
    <ligand>
        <name>FMN</name>
        <dbReference type="ChEBI" id="CHEBI:58210"/>
    </ligand>
</feature>
<feature type="binding site" evidence="2">
    <location>
        <begin position="205"/>
        <end position="207"/>
    </location>
    <ligand>
        <name>pyridoxal 5'-phosphate</name>
        <dbReference type="ChEBI" id="CHEBI:597326"/>
    </ligand>
</feature>
<feature type="binding site" evidence="2">
    <location>
        <position position="209"/>
    </location>
    <ligand>
        <name>FMN</name>
        <dbReference type="ChEBI" id="CHEBI:58210"/>
    </ligand>
</feature>
<keyword id="KW-0285">Flavoprotein</keyword>
<keyword id="KW-0288">FMN</keyword>
<keyword id="KW-0560">Oxidoreductase</keyword>
<keyword id="KW-0664">Pyridoxine biosynthesis</keyword>
<keyword id="KW-1185">Reference proteome</keyword>
<accession>Q20939</accession>
<comment type="function">
    <text evidence="1">Catalyzes the oxidation of either pyridoxine 5'-phosphate (PNP) or pyridoxamine 5'-phosphate (PMP) into pyridoxal 5'-phosphate (PLP).</text>
</comment>
<comment type="catalytic activity">
    <reaction>
        <text>pyridoxamine 5'-phosphate + O2 + H2O = pyridoxal 5'-phosphate + H2O2 + NH4(+)</text>
        <dbReference type="Rhea" id="RHEA:15817"/>
        <dbReference type="ChEBI" id="CHEBI:15377"/>
        <dbReference type="ChEBI" id="CHEBI:15379"/>
        <dbReference type="ChEBI" id="CHEBI:16240"/>
        <dbReference type="ChEBI" id="CHEBI:28938"/>
        <dbReference type="ChEBI" id="CHEBI:58451"/>
        <dbReference type="ChEBI" id="CHEBI:597326"/>
        <dbReference type="EC" id="1.4.3.5"/>
    </reaction>
</comment>
<comment type="catalytic activity">
    <reaction>
        <text>pyridoxine 5'-phosphate + O2 = pyridoxal 5'-phosphate + H2O2</text>
        <dbReference type="Rhea" id="RHEA:15149"/>
        <dbReference type="ChEBI" id="CHEBI:15379"/>
        <dbReference type="ChEBI" id="CHEBI:16240"/>
        <dbReference type="ChEBI" id="CHEBI:58589"/>
        <dbReference type="ChEBI" id="CHEBI:597326"/>
        <dbReference type="EC" id="1.4.3.5"/>
    </reaction>
</comment>
<comment type="cofactor">
    <cofactor evidence="1">
        <name>FMN</name>
        <dbReference type="ChEBI" id="CHEBI:58210"/>
    </cofactor>
    <text evidence="1">Binds 1 FMN per subunit.</text>
</comment>
<comment type="pathway">
    <text>Cofactor metabolism; pyridoxal 5'-phosphate salvage; pyridoxal 5'-phosphate from pyridoxamine 5'-phosphate: step 1/1.</text>
</comment>
<comment type="pathway">
    <text>Cofactor metabolism; pyridoxal 5'-phosphate salvage; pyridoxal 5'-phosphate from pyridoxine 5'-phosphate: step 1/1.</text>
</comment>
<comment type="subunit">
    <text evidence="1">Homodimer.</text>
</comment>
<comment type="similarity">
    <text evidence="4">Belongs to the pyridoxamine 5'-phosphate oxidase family.</text>
</comment>